<organism>
    <name type="scientific">Mus musculus</name>
    <name type="common">Mouse</name>
    <dbReference type="NCBI Taxonomy" id="10090"/>
    <lineage>
        <taxon>Eukaryota</taxon>
        <taxon>Metazoa</taxon>
        <taxon>Chordata</taxon>
        <taxon>Craniata</taxon>
        <taxon>Vertebrata</taxon>
        <taxon>Euteleostomi</taxon>
        <taxon>Mammalia</taxon>
        <taxon>Eutheria</taxon>
        <taxon>Euarchontoglires</taxon>
        <taxon>Glires</taxon>
        <taxon>Rodentia</taxon>
        <taxon>Myomorpha</taxon>
        <taxon>Muroidea</taxon>
        <taxon>Muridae</taxon>
        <taxon>Murinae</taxon>
        <taxon>Mus</taxon>
        <taxon>Mus</taxon>
    </lineage>
</organism>
<name>CAN12_MOUSE</name>
<keyword id="KW-0025">Alternative splicing</keyword>
<keyword id="KW-0106">Calcium</keyword>
<keyword id="KW-0378">Hydrolase</keyword>
<keyword id="KW-0479">Metal-binding</keyword>
<keyword id="KW-0645">Protease</keyword>
<keyword id="KW-1185">Reference proteome</keyword>
<keyword id="KW-0788">Thiol protease</keyword>
<reference key="1">
    <citation type="journal article" date="2000" name="Genomics">
        <title>Gene structure, chromosomal localization and expression pattern of Capn12, a new member of the calpain large subunit gene family.</title>
        <authorList>
            <person name="Dear T.N."/>
            <person name="Meier N.T."/>
            <person name="Hunn M."/>
            <person name="Boehm T."/>
        </authorList>
    </citation>
    <scope>NUCLEOTIDE SEQUENCE [GENOMIC DNA / MRNA] (ISOFORMS 1; 2; 3 AND 4)</scope>
</reference>
<reference key="2">
    <citation type="journal article" date="2004" name="Genome Res.">
        <title>The status, quality, and expansion of the NIH full-length cDNA project: the Mammalian Gene Collection (MGC).</title>
        <authorList>
            <consortium name="The MGC Project Team"/>
        </authorList>
    </citation>
    <scope>NUCLEOTIDE SEQUENCE [LARGE SCALE MRNA] (ISOFORM 2)</scope>
    <source>
        <tissue>Mammary gland</tissue>
    </source>
</reference>
<protein>
    <recommendedName>
        <fullName>Calpain-12</fullName>
        <ecNumber>3.4.22.-</ecNumber>
    </recommendedName>
    <alternativeName>
        <fullName>Calcium-activated neutral proteinase 12</fullName>
        <shortName>CANP 12</shortName>
    </alternativeName>
</protein>
<proteinExistence type="evidence at transcript level"/>
<gene>
    <name type="primary">Capn12</name>
</gene>
<dbReference type="EC" id="3.4.22.-"/>
<dbReference type="EMBL" id="AJ289241">
    <property type="protein sequence ID" value="CAC10066.1"/>
    <property type="molecule type" value="Genomic_DNA"/>
</dbReference>
<dbReference type="EMBL" id="AJ289241">
    <property type="protein sequence ID" value="CAC10067.1"/>
    <property type="molecule type" value="Genomic_DNA"/>
</dbReference>
<dbReference type="EMBL" id="AJ289241">
    <property type="protein sequence ID" value="CAC10068.1"/>
    <property type="molecule type" value="Genomic_DNA"/>
</dbReference>
<dbReference type="EMBL" id="AJ289243">
    <property type="protein sequence ID" value="CAC10070.1"/>
    <property type="molecule type" value="mRNA"/>
</dbReference>
<dbReference type="EMBL" id="BC028751">
    <property type="protein sequence ID" value="AAH28751.1"/>
    <property type="molecule type" value="mRNA"/>
</dbReference>
<dbReference type="CCDS" id="CCDS52166.1">
    <molecule id="Q9ER56-1"/>
</dbReference>
<dbReference type="RefSeq" id="XP_006540316.1">
    <property type="nucleotide sequence ID" value="XM_006540253.3"/>
</dbReference>
<dbReference type="SMR" id="Q9ER56"/>
<dbReference type="BioGRID" id="208623">
    <property type="interactions" value="6"/>
</dbReference>
<dbReference type="FunCoup" id="Q9ER56">
    <property type="interactions" value="30"/>
</dbReference>
<dbReference type="STRING" id="10090.ENSMUSP00000069055"/>
<dbReference type="MEROPS" id="C02.017"/>
<dbReference type="PhosphoSitePlus" id="Q9ER56"/>
<dbReference type="PaxDb" id="10090-ENSMUSP00000069055"/>
<dbReference type="ProteomicsDB" id="265427">
    <molecule id="Q9ER56-1"/>
</dbReference>
<dbReference type="ProteomicsDB" id="265428">
    <molecule id="Q9ER56-2"/>
</dbReference>
<dbReference type="ProteomicsDB" id="265429">
    <molecule id="Q9ER56-3"/>
</dbReference>
<dbReference type="ProteomicsDB" id="265430">
    <molecule id="Q9ER56-4"/>
</dbReference>
<dbReference type="DNASU" id="60594"/>
<dbReference type="AGR" id="MGI:1891369"/>
<dbReference type="MGI" id="MGI:1891369">
    <property type="gene designation" value="Capn12"/>
</dbReference>
<dbReference type="eggNOG" id="KOG0045">
    <property type="taxonomic scope" value="Eukaryota"/>
</dbReference>
<dbReference type="InParanoid" id="Q9ER56"/>
<dbReference type="PhylomeDB" id="Q9ER56"/>
<dbReference type="BRENDA" id="3.4.22.B32">
    <property type="organism ID" value="3474"/>
</dbReference>
<dbReference type="Reactome" id="R-MMU-1474228">
    <property type="pathway name" value="Degradation of the extracellular matrix"/>
</dbReference>
<dbReference type="BioGRID-ORCS" id="60594">
    <property type="hits" value="3 hits in 80 CRISPR screens"/>
</dbReference>
<dbReference type="ChiTaRS" id="Capn12">
    <property type="organism name" value="mouse"/>
</dbReference>
<dbReference type="PRO" id="PR:Q9ER56"/>
<dbReference type="Proteomes" id="UP000000589">
    <property type="component" value="Unplaced"/>
</dbReference>
<dbReference type="RNAct" id="Q9ER56">
    <property type="molecule type" value="protein"/>
</dbReference>
<dbReference type="GO" id="GO:0005509">
    <property type="term" value="F:calcium ion binding"/>
    <property type="evidence" value="ECO:0007669"/>
    <property type="project" value="InterPro"/>
</dbReference>
<dbReference type="GO" id="GO:0004198">
    <property type="term" value="F:calcium-dependent cysteine-type endopeptidase activity"/>
    <property type="evidence" value="ECO:0007669"/>
    <property type="project" value="InterPro"/>
</dbReference>
<dbReference type="GO" id="GO:0006508">
    <property type="term" value="P:proteolysis"/>
    <property type="evidence" value="ECO:0007669"/>
    <property type="project" value="UniProtKB-KW"/>
</dbReference>
<dbReference type="CDD" id="cd00214">
    <property type="entry name" value="Calpain_III"/>
    <property type="match status" value="1"/>
</dbReference>
<dbReference type="CDD" id="cd00044">
    <property type="entry name" value="CysPc"/>
    <property type="match status" value="1"/>
</dbReference>
<dbReference type="FunFam" id="2.60.120.380:FF:000011">
    <property type="entry name" value="Calpain 12"/>
    <property type="match status" value="1"/>
</dbReference>
<dbReference type="FunFam" id="1.10.238.10:FF:000225">
    <property type="entry name" value="Calpain-12"/>
    <property type="match status" value="1"/>
</dbReference>
<dbReference type="FunFam" id="3.90.70.10:FF:000464">
    <property type="entry name" value="Uncharacterized protein"/>
    <property type="match status" value="1"/>
</dbReference>
<dbReference type="Gene3D" id="2.60.120.380">
    <property type="match status" value="1"/>
</dbReference>
<dbReference type="Gene3D" id="3.90.70.10">
    <property type="entry name" value="Cysteine proteinases"/>
    <property type="match status" value="1"/>
</dbReference>
<dbReference type="Gene3D" id="1.10.238.10">
    <property type="entry name" value="EF-hand"/>
    <property type="match status" value="1"/>
</dbReference>
<dbReference type="InterPro" id="IPR033883">
    <property type="entry name" value="C2_III"/>
</dbReference>
<dbReference type="InterPro" id="IPR022684">
    <property type="entry name" value="Calpain_cysteine_protease"/>
</dbReference>
<dbReference type="InterPro" id="IPR022682">
    <property type="entry name" value="Calpain_domain_III"/>
</dbReference>
<dbReference type="InterPro" id="IPR022683">
    <property type="entry name" value="Calpain_III"/>
</dbReference>
<dbReference type="InterPro" id="IPR036213">
    <property type="entry name" value="Calpain_III_sf"/>
</dbReference>
<dbReference type="InterPro" id="IPR011992">
    <property type="entry name" value="EF-hand-dom_pair"/>
</dbReference>
<dbReference type="InterPro" id="IPR018247">
    <property type="entry name" value="EF_Hand_1_Ca_BS"/>
</dbReference>
<dbReference type="InterPro" id="IPR002048">
    <property type="entry name" value="EF_hand_dom"/>
</dbReference>
<dbReference type="InterPro" id="IPR038765">
    <property type="entry name" value="Papain-like_cys_pep_sf"/>
</dbReference>
<dbReference type="InterPro" id="IPR000169">
    <property type="entry name" value="Pept_cys_AS"/>
</dbReference>
<dbReference type="InterPro" id="IPR001300">
    <property type="entry name" value="Peptidase_C2_calpain_cat"/>
</dbReference>
<dbReference type="PANTHER" id="PTHR10183">
    <property type="entry name" value="CALPAIN"/>
    <property type="match status" value="1"/>
</dbReference>
<dbReference type="PANTHER" id="PTHR10183:SF280">
    <property type="entry name" value="CALPAIN-12"/>
    <property type="match status" value="1"/>
</dbReference>
<dbReference type="Pfam" id="PF01067">
    <property type="entry name" value="Calpain_III"/>
    <property type="match status" value="1"/>
</dbReference>
<dbReference type="Pfam" id="PF00648">
    <property type="entry name" value="Peptidase_C2"/>
    <property type="match status" value="1"/>
</dbReference>
<dbReference type="PRINTS" id="PR00704">
    <property type="entry name" value="CALPAIN"/>
</dbReference>
<dbReference type="SMART" id="SM00720">
    <property type="entry name" value="calpain_III"/>
    <property type="match status" value="1"/>
</dbReference>
<dbReference type="SMART" id="SM00230">
    <property type="entry name" value="CysPc"/>
    <property type="match status" value="1"/>
</dbReference>
<dbReference type="SUPFAM" id="SSF49758">
    <property type="entry name" value="Calpain large subunit, middle domain (domain III)"/>
    <property type="match status" value="1"/>
</dbReference>
<dbReference type="SUPFAM" id="SSF54001">
    <property type="entry name" value="Cysteine proteinases"/>
    <property type="match status" value="1"/>
</dbReference>
<dbReference type="SUPFAM" id="SSF47473">
    <property type="entry name" value="EF-hand"/>
    <property type="match status" value="1"/>
</dbReference>
<dbReference type="PROSITE" id="PS50203">
    <property type="entry name" value="CALPAIN_CAT"/>
    <property type="match status" value="1"/>
</dbReference>
<dbReference type="PROSITE" id="PS00018">
    <property type="entry name" value="EF_HAND_1"/>
    <property type="match status" value="1"/>
</dbReference>
<dbReference type="PROSITE" id="PS50222">
    <property type="entry name" value="EF_HAND_2"/>
    <property type="match status" value="1"/>
</dbReference>
<dbReference type="PROSITE" id="PS00139">
    <property type="entry name" value="THIOL_PROTEASE_CYS"/>
    <property type="match status" value="1"/>
</dbReference>
<evidence type="ECO:0000250" key="1"/>
<evidence type="ECO:0000255" key="2">
    <source>
        <dbReference type="PROSITE-ProRule" id="PRU00239"/>
    </source>
</evidence>
<evidence type="ECO:0000255" key="3">
    <source>
        <dbReference type="PROSITE-ProRule" id="PRU00448"/>
    </source>
</evidence>
<evidence type="ECO:0000256" key="4">
    <source>
        <dbReference type="SAM" id="MobiDB-lite"/>
    </source>
</evidence>
<evidence type="ECO:0000303" key="5">
    <source>
    </source>
</evidence>
<evidence type="ECO:0000303" key="6">
    <source>
    </source>
</evidence>
<evidence type="ECO:0000305" key="7"/>
<comment type="function">
    <text evidence="1">Calcium-regulated non-lysosomal thiol-protease.</text>
</comment>
<comment type="alternative products">
    <event type="alternative splicing"/>
    <isoform>
        <id>Q9ER56-1</id>
        <name>1</name>
        <sequence type="displayed"/>
    </isoform>
    <isoform>
        <id>Q9ER56-2</id>
        <name>2</name>
        <sequence type="described" ref="VSP_007807 VSP_007808"/>
    </isoform>
    <isoform>
        <id>Q9ER56-3</id>
        <name>3</name>
        <name>variant 3</name>
        <sequence type="described" ref="VSP_007809 VSP_007810"/>
    </isoform>
    <isoform>
        <id>Q9ER56-4</id>
        <name>4</name>
        <name>variant 2</name>
        <sequence type="described" ref="VSP_007811 VSP_007812"/>
    </isoform>
</comment>
<comment type="tissue specificity">
    <text>Expression localized to the cortex of the hair follicle during the anagen phase of hair cycle.</text>
</comment>
<comment type="similarity">
    <text evidence="7">Belongs to the peptidase C2 family.</text>
</comment>
<sequence length="720" mass="80588">MASGNRKVTIQLVDDGAGTGAGGPQLFKGQNYEAIRRACLDSGILFRDPCFPAGPDALGYDKLGPDSEKAKGVEWKRPHEFCAEPQFICEDMSRTDVCQGSLGNCWLLAAAASLTLYPRLLYRVVPPGQGFQDGYAGVFHFQLWQFGRWVDVVVDDKLPVREGKLMFVRSEQRNEFWAPLLEKAYAKLHGSYEVMRGGHMNEAFVDFTGGVGEVLYLRQNTPGVFAALRHALAKESLVGATALSDRGEIRTDEGLVKGHAYSVTGTHKMSLGFTKVRLLRLRNPWGRVEWSGPWSDSCPRWDMLPSEWRDALLVKKEDGEFWMELQDFLTHFNTVQICSLSPEVLGPSPAGGGWHIHIFQGRWVRGFNSGGSQPSAENFWTNPQFRLTLLEPDEEEDDDDEEGPWGGWGAAGARGPARGGRVPKCTVLLSLIQRNRRCLRAKGLTYLTVGFHVFQIPEELLDLWDSPRSRALLPGLLRADRSVFCARRDVSRRCRLPPGHYLVVPSASRVGDEADFTLRIFSERSHTAVEIDDVISADLDALQAPYKPLELELAQLFLELAGEEEELNALQLQTLISIALEPARANTRTPGEIGLRTCEQLVQCFGRGQRLSLHHFQELWGHLMSWQATFDKFDEDASGTMNSCELRLALTAAGFHLNNQLTQSLTSRYRDSRLRVDFERFVGCAARLTCIFRHCCQHLDGGEGVVCLTHKQWSEVATFS</sequence>
<feature type="chain" id="PRO_0000207731" description="Calpain-12">
    <location>
        <begin position="1"/>
        <end position="720"/>
    </location>
</feature>
<feature type="domain" description="Calpain catalytic" evidence="2">
    <location>
        <begin position="45"/>
        <end position="341"/>
    </location>
</feature>
<feature type="domain" description="EF-hand" evidence="3">
    <location>
        <begin position="621"/>
        <end position="656"/>
    </location>
</feature>
<feature type="region of interest" description="Domain III">
    <location>
        <begin position="342"/>
        <end position="541"/>
    </location>
</feature>
<feature type="region of interest" description="Disordered" evidence="4">
    <location>
        <begin position="393"/>
        <end position="415"/>
    </location>
</feature>
<feature type="region of interest" description="Domain IV">
    <location>
        <begin position="542"/>
        <end position="720"/>
    </location>
</feature>
<feature type="compositionally biased region" description="Acidic residues" evidence="4">
    <location>
        <begin position="393"/>
        <end position="403"/>
    </location>
</feature>
<feature type="active site" evidence="1">
    <location>
        <position position="105"/>
    </location>
</feature>
<feature type="active site" evidence="1">
    <location>
        <position position="259"/>
    </location>
</feature>
<feature type="active site" evidence="1">
    <location>
        <position position="283"/>
    </location>
</feature>
<feature type="binding site" evidence="3">
    <location>
        <position position="634"/>
    </location>
    <ligand>
        <name>Ca(2+)</name>
        <dbReference type="ChEBI" id="CHEBI:29108"/>
    </ligand>
</feature>
<feature type="binding site" evidence="3">
    <location>
        <position position="636"/>
    </location>
    <ligand>
        <name>Ca(2+)</name>
        <dbReference type="ChEBI" id="CHEBI:29108"/>
    </ligand>
</feature>
<feature type="binding site" evidence="3">
    <location>
        <position position="638"/>
    </location>
    <ligand>
        <name>Ca(2+)</name>
        <dbReference type="ChEBI" id="CHEBI:29108"/>
    </ligand>
</feature>
<feature type="binding site" evidence="3">
    <location>
        <position position="640"/>
    </location>
    <ligand>
        <name>Ca(2+)</name>
        <dbReference type="ChEBI" id="CHEBI:29108"/>
    </ligand>
</feature>
<feature type="binding site" evidence="3">
    <location>
        <position position="645"/>
    </location>
    <ligand>
        <name>Ca(2+)</name>
        <dbReference type="ChEBI" id="CHEBI:29108"/>
    </ligand>
</feature>
<feature type="splice variant" id="VSP_007807" description="In isoform 2." evidence="5 6">
    <original>SPEVLGPSPAGGGWHIHIFQGRWVRGFNSGGSQPSAENFWTNPQFRLTLLEPDEEEDDDDEEGPWGGWGAAGARGPARGGRVPKCTVLLSLIQRNRRCLRAKGLTYLT</original>
    <variation>LPTPGWRRGGRLPDPQTVVGGGYLLIGLKLREVTLLPDSLSQRWWLCNPGRPHKCWDYELEPSQTELPPFLLKPLHVSPCLERGTTPTQALGWWALPAPWGMNRDAGRR</variation>
    <location>
        <begin position="341"/>
        <end position="448"/>
    </location>
</feature>
<feature type="splice variant" id="VSP_007808" description="In isoform 2." evidence="5 6">
    <location>
        <begin position="449"/>
        <end position="720"/>
    </location>
</feature>
<feature type="splice variant" id="VSP_007811" description="In isoform 4." evidence="5">
    <original>LLDLWDSPRSRALLPGLLRADRSVFCARRDVSRRCRLPPGHYL</original>
    <variation>PRALAGTAARRPLGFLRPPRREPSLSPAAWPLPGGTQRLARRR</variation>
    <location>
        <begin position="460"/>
        <end position="502"/>
    </location>
</feature>
<feature type="splice variant" id="VSP_007809" description="In isoform 3." evidence="5">
    <original>LLD</original>
    <variation>GDR</variation>
    <location>
        <begin position="460"/>
        <end position="462"/>
    </location>
</feature>
<feature type="splice variant" id="VSP_007810" description="In isoform 3." evidence="5">
    <location>
        <begin position="463"/>
        <end position="720"/>
    </location>
</feature>
<feature type="splice variant" id="VSP_007812" description="In isoform 4." evidence="5">
    <location>
        <begin position="503"/>
        <end position="720"/>
    </location>
</feature>
<accession>Q9ER56</accession>
<accession>Q9ER53</accession>
<accession>Q9ER54</accession>
<accession>Q9ER55</accession>